<evidence type="ECO:0000250" key="1"/>
<evidence type="ECO:0000255" key="2"/>
<evidence type="ECO:0000255" key="3">
    <source>
        <dbReference type="PROSITE-ProRule" id="PRU00114"/>
    </source>
</evidence>
<evidence type="ECO:0000255" key="4">
    <source>
        <dbReference type="PROSITE-ProRule" id="PRU00204"/>
    </source>
</evidence>
<evidence type="ECO:0000269" key="5">
    <source>
    </source>
</evidence>
<evidence type="ECO:0000269" key="6">
    <source>
    </source>
</evidence>
<evidence type="ECO:0000269" key="7">
    <source>
    </source>
</evidence>
<evidence type="ECO:0000303" key="8">
    <source>
    </source>
</evidence>
<evidence type="ECO:0000305" key="9"/>
<evidence type="ECO:0007744" key="10">
    <source>
    </source>
</evidence>
<evidence type="ECO:0007744" key="11">
    <source>
    </source>
</evidence>
<gene>
    <name type="primary">Sigirr</name>
    <name type="synonym">Tir8</name>
</gene>
<proteinExistence type="evidence at protein level"/>
<sequence length="409" mass="46159">MAGVCDMAPNFLSPSEDQALGLALGREVALNCTAWVFSRPQCPQPSVQWLKDGLALGNGSHFSLHEDFWVSANFSEIVSSVLVLNLTNAEDYGTFTCSVWNVSSHSFTLWRAGPAGHVAAVLASLLVLVVLLLVALLYVKCRLNMLLWYQDTYGEVEMNDGKLYDAYVSYSDCPEDRKFVNFILKPQLERRRGYKLFLEDRDLLPRAEPSADLLVNLSRCRRLIVVLSDAFLSRPWCSQSFREGLCRLLELTRRPIFITFEGQRREPIHPALRLLRQHRHLVTLVLWKPGSVTPSSDFWKELQLALPRKVQYRPVEGDPQTRLQDDKDPMLIVRGRAAQGRGMESELDPDPEGDLGVRGPVFGEPPTPLQETRICIGESHGSEMDVSDLGSRNYSARTDFYCLVSEDDV</sequence>
<reference key="1">
    <citation type="journal article" date="2004" name="Proc. Natl. Acad. Sci. U.S.A.">
        <title>Intestinal inflammation in mice deficient in Tir8, an inhibitory member of the IL-1 receptor family.</title>
        <authorList>
            <person name="Garlanda C."/>
            <person name="Riva F."/>
            <person name="Polentarutti N."/>
            <person name="Buracchi C."/>
            <person name="Sironi M."/>
            <person name="De Bortoli M."/>
            <person name="Muzio M."/>
            <person name="Bergottini R."/>
            <person name="Scanziani E."/>
            <person name="Vecchi A."/>
            <person name="Hirsch E."/>
            <person name="Mantovani A."/>
        </authorList>
    </citation>
    <scope>NUCLEOTIDE SEQUENCE [MRNA] (ISOFORM 1)</scope>
    <scope>TISSUE SPECIFICITY</scope>
</reference>
<reference key="2">
    <citation type="journal article" date="2004" name="Genome Res.">
        <title>The status, quality, and expansion of the NIH full-length cDNA project: the Mammalian Gene Collection (MGC).</title>
        <authorList>
            <consortium name="The MGC Project Team"/>
        </authorList>
    </citation>
    <scope>NUCLEOTIDE SEQUENCE [LARGE SCALE MRNA] (ISOFORMS 1 AND 2)</scope>
    <source>
        <strain>FVB/N</strain>
        <tissue>Kidney</tissue>
    </source>
</reference>
<reference key="3">
    <citation type="journal article" date="1999" name="Cytokine">
        <title>Identification and characterization of SIGIRR, a molecule representing a novel subtype of the IL-1R superfamily.</title>
        <authorList>
            <person name="Thomassen E."/>
            <person name="Renshaw B.R."/>
            <person name="Sims J.E."/>
        </authorList>
    </citation>
    <scope>CHARACTERIZATION</scope>
</reference>
<reference key="4">
    <citation type="journal article" date="2003" name="Nat. Immunol.">
        <title>SIGIRR, a negative regulator of Toll-like receptor-interleukin 1 receptor signaling.</title>
        <authorList>
            <person name="Wald D."/>
            <person name="Qin J."/>
            <person name="Zhao Z."/>
            <person name="Qian Y."/>
            <person name="Naramura M."/>
            <person name="Tian L."/>
            <person name="Towne J."/>
            <person name="Sims J.E."/>
            <person name="Stark G.R."/>
            <person name="Li X."/>
        </authorList>
    </citation>
    <scope>FUNCTION</scope>
    <scope>TISSUE SPECIFICITY</scope>
    <scope>INDUCTION</scope>
</reference>
<reference key="5">
    <citation type="journal article" date="2007" name="Proc. Natl. Acad. Sci. U.S.A.">
        <title>Large-scale phosphorylation analysis of mouse liver.</title>
        <authorList>
            <person name="Villen J."/>
            <person name="Beausoleil S.A."/>
            <person name="Gerber S.A."/>
            <person name="Gygi S.P."/>
        </authorList>
    </citation>
    <scope>PHOSPHORYLATION [LARGE SCALE ANALYSIS] AT SER-382</scope>
    <scope>IDENTIFICATION BY MASS SPECTROMETRY [LARGE SCALE ANALYSIS]</scope>
    <source>
        <tissue>Liver</tissue>
    </source>
</reference>
<reference key="6">
    <citation type="journal article" date="2010" name="Cell">
        <title>A tissue-specific atlas of mouse protein phosphorylation and expression.</title>
        <authorList>
            <person name="Huttlin E.L."/>
            <person name="Jedrychowski M.P."/>
            <person name="Elias J.E."/>
            <person name="Goswami T."/>
            <person name="Rad R."/>
            <person name="Beausoleil S.A."/>
            <person name="Villen J."/>
            <person name="Haas W."/>
            <person name="Sowa M.E."/>
            <person name="Gygi S.P."/>
        </authorList>
    </citation>
    <scope>PHOSPHORYLATION [LARGE SCALE ANALYSIS] AT SER-382</scope>
    <scope>IDENTIFICATION BY MASS SPECTROMETRY [LARGE SCALE ANALYSIS]</scope>
    <source>
        <tissue>Kidney</tissue>
        <tissue>Liver</tissue>
        <tissue>Lung</tissue>
        <tissue>Spleen</tissue>
    </source>
</reference>
<reference key="7">
    <citation type="journal article" date="2010" name="Clin. Exp. Immunol.">
        <title>Down-regulation of single immunoglobulin interleukin-1R-related molecule (SIGIRR)/TIR8 expression in intestinal epithelial cells during inflammation.</title>
        <authorList>
            <person name="Kadota C."/>
            <person name="Ishihara S."/>
            <person name="Aziz M.M."/>
            <person name="Rumi M.A."/>
            <person name="Oshima N."/>
            <person name="Mishima Y."/>
            <person name="Moriyama I."/>
            <person name="Yuki T."/>
            <person name="Amano Y."/>
            <person name="Kinoshita Y."/>
        </authorList>
    </citation>
    <scope>INDUCTION</scope>
    <scope>TISSUE SPECIFICITY</scope>
</reference>
<feature type="chain" id="PRO_0000099066" description="Single Ig IL-1-related receptor">
    <location>
        <begin position="1"/>
        <end position="409"/>
    </location>
</feature>
<feature type="topological domain" description="Extracellular" evidence="2">
    <location>
        <begin position="1"/>
        <end position="117"/>
    </location>
</feature>
<feature type="transmembrane region" description="Helical; Signal-anchor for type III membrane protein" evidence="2">
    <location>
        <begin position="118"/>
        <end position="138"/>
    </location>
</feature>
<feature type="topological domain" description="Cytoplasmic" evidence="2">
    <location>
        <begin position="139"/>
        <end position="409"/>
    </location>
</feature>
<feature type="domain" description="Ig-like C2-type">
    <location>
        <begin position="9"/>
        <end position="108"/>
    </location>
</feature>
<feature type="domain" description="TIR" evidence="4">
    <location>
        <begin position="162"/>
        <end position="306"/>
    </location>
</feature>
<feature type="modified residue" description="Phosphoserine" evidence="10 11">
    <location>
        <position position="382"/>
    </location>
</feature>
<feature type="glycosylation site" description="N-linked (GlcNAc...) asparagine" evidence="2">
    <location>
        <position position="31"/>
    </location>
</feature>
<feature type="glycosylation site" description="N-linked (GlcNAc...) asparagine" evidence="2">
    <location>
        <position position="58"/>
    </location>
</feature>
<feature type="glycosylation site" description="N-linked (GlcNAc...) asparagine" evidence="2">
    <location>
        <position position="73"/>
    </location>
</feature>
<feature type="glycosylation site" description="N-linked (GlcNAc...) asparagine" evidence="2">
    <location>
        <position position="85"/>
    </location>
</feature>
<feature type="glycosylation site" description="N-linked (GlcNAc...) asparagine" evidence="2">
    <location>
        <position position="101"/>
    </location>
</feature>
<feature type="disulfide bond" evidence="3">
    <location>
        <begin position="32"/>
        <end position="97"/>
    </location>
</feature>
<feature type="splice variant" id="VSP_015718" description="In isoform 2." evidence="8">
    <original>VRGPVFGEPPTPLQETRICIGESHGSEMDVSDLGSRNYSARTDFYCLVSEDDV</original>
    <variation>MLTADQGVKHSSSVLERTQAWRTLASRDPVS</variation>
    <location>
        <begin position="357"/>
        <end position="409"/>
    </location>
</feature>
<feature type="sequence conflict" description="In Ref. 1; AAF26200." evidence="9" ref="1">
    <original>G</original>
    <variation>R</variation>
    <location>
        <position position="154"/>
    </location>
</feature>
<feature type="sequence conflict" description="In Ref. 1; AAF26200." evidence="9" ref="1">
    <original>EP</original>
    <variation>DA</variation>
    <location>
        <begin position="208"/>
        <end position="209"/>
    </location>
</feature>
<feature type="sequence conflict" description="In Ref. 1; AAF26200." evidence="9" ref="1">
    <original>QH</original>
    <variation>HD</variation>
    <location>
        <begin position="277"/>
        <end position="278"/>
    </location>
</feature>
<protein>
    <recommendedName>
        <fullName>Single Ig IL-1-related receptor</fullName>
    </recommendedName>
    <alternativeName>
        <fullName>Single Ig IL-1R-related molecule</fullName>
    </alternativeName>
    <alternativeName>
        <fullName>Single immunoglobulin domain-containing IL1R-related protein</fullName>
    </alternativeName>
    <alternativeName>
        <fullName>Toll/interleukin-1 receptor 8</fullName>
        <shortName>TIR8</shortName>
    </alternativeName>
</protein>
<comment type="function">
    <text evidence="1 5">Acts as a negative regulator of the Toll-like and IL-1R receptor signaling pathways. Attenuates the recruitment of receptor-proximal signaling components to the TLR4 receptor, probably through an TIR-TIR domain interaction with TLR4. Through its extracellular domain interferes with the heterodimerization of Il1R1 and IL1RAP (By similarity).</text>
</comment>
<comment type="subunit">
    <text evidence="1">Interacts with IL1R1, IRAK1, TLR4, TLR5, TLR9 and TRAF6. Upon IL-1 stimulation found in a complex at least composed of IL1R1, SIGIRR, MYD88, IRAK1 and TRAF6. Upon stimulation with LPC found in a complex at least composed of TLR4, SIG1IR, MYD88, IRAK1 and TRAF6. Interacts with PALM3 (By similarity).</text>
</comment>
<comment type="subcellular location">
    <subcellularLocation>
        <location evidence="9">Membrane</location>
        <topology evidence="9">Single-pass type III membrane protein</topology>
    </subcellularLocation>
</comment>
<comment type="alternative products">
    <event type="alternative splicing"/>
    <isoform>
        <id>Q9JLZ8-1</id>
        <name>1</name>
        <sequence type="displayed"/>
    </isoform>
    <isoform>
        <id>Q9JLZ8-2</id>
        <name>2</name>
        <sequence type="described" ref="VSP_015718"/>
    </isoform>
</comment>
<comment type="tissue specificity">
    <text evidence="5 6 7">Expressed at high levels in kidney, and at moderate levels in colon, small intestine, lung, spleen and liver. Not expressed in brain and muscle. Expressed at high levels in epithelial cells, at moderate levels in splenocytes, and at low or undetectable levels in fibroblasts or endothelial cells. Expressed in mucosal and dendritic cells.</text>
</comment>
<comment type="induction">
    <text evidence="5 7">Down-regulated by LPS. Down-regulated during inflammation by inhibition of an SP1-mediated pathway.</text>
</comment>
<comment type="similarity">
    <text evidence="9">Belongs to the interleukin-1 receptor family.</text>
</comment>
<comment type="sequence caution" evidence="9">
    <conflict type="frameshift">
        <sequence resource="EMBL-CDS" id="AAF26200"/>
    </conflict>
</comment>
<accession>Q9JLZ8</accession>
<accession>Q52L48</accession>
<keyword id="KW-0025">Alternative splicing</keyword>
<keyword id="KW-1015">Disulfide bond</keyword>
<keyword id="KW-0325">Glycoprotein</keyword>
<keyword id="KW-0393">Immunoglobulin domain</keyword>
<keyword id="KW-0472">Membrane</keyword>
<keyword id="KW-0597">Phosphoprotein</keyword>
<keyword id="KW-1185">Reference proteome</keyword>
<keyword id="KW-0735">Signal-anchor</keyword>
<keyword id="KW-0812">Transmembrane</keyword>
<keyword id="KW-1133">Transmembrane helix</keyword>
<name>SIGIR_MOUSE</name>
<organism>
    <name type="scientific">Mus musculus</name>
    <name type="common">Mouse</name>
    <dbReference type="NCBI Taxonomy" id="10090"/>
    <lineage>
        <taxon>Eukaryota</taxon>
        <taxon>Metazoa</taxon>
        <taxon>Chordata</taxon>
        <taxon>Craniata</taxon>
        <taxon>Vertebrata</taxon>
        <taxon>Euteleostomi</taxon>
        <taxon>Mammalia</taxon>
        <taxon>Eutheria</taxon>
        <taxon>Euarchontoglires</taxon>
        <taxon>Glires</taxon>
        <taxon>Rodentia</taxon>
        <taxon>Myomorpha</taxon>
        <taxon>Muroidea</taxon>
        <taxon>Muridae</taxon>
        <taxon>Murinae</taxon>
        <taxon>Mus</taxon>
        <taxon>Mus</taxon>
    </lineage>
</organism>
<dbReference type="EMBL" id="AF113795">
    <property type="protein sequence ID" value="AAF26200.1"/>
    <property type="status" value="ALT_FRAME"/>
    <property type="molecule type" value="mRNA"/>
</dbReference>
<dbReference type="EMBL" id="BC010806">
    <property type="protein sequence ID" value="AAH10806.1"/>
    <property type="molecule type" value="mRNA"/>
</dbReference>
<dbReference type="EMBL" id="BC094069">
    <property type="protein sequence ID" value="AAH94069.1"/>
    <property type="molecule type" value="mRNA"/>
</dbReference>
<dbReference type="CCDS" id="CCDS40179.1">
    <molecule id="Q9JLZ8-1"/>
</dbReference>
<dbReference type="RefSeq" id="NP_001341984.1">
    <molecule id="Q9JLZ8-1"/>
    <property type="nucleotide sequence ID" value="NM_001355055.2"/>
</dbReference>
<dbReference type="RefSeq" id="NP_001414071.1">
    <molecule id="Q9JLZ8-1"/>
    <property type="nucleotide sequence ID" value="NM_001427142.1"/>
</dbReference>
<dbReference type="RefSeq" id="NP_001414076.1">
    <molecule id="Q9JLZ8-1"/>
    <property type="nucleotide sequence ID" value="NM_001427147.1"/>
</dbReference>
<dbReference type="RefSeq" id="NP_001414077.1">
    <molecule id="Q9JLZ8-1"/>
    <property type="nucleotide sequence ID" value="NM_001427148.1"/>
</dbReference>
<dbReference type="RefSeq" id="NP_001414078.1">
    <molecule id="Q9JLZ8-1"/>
    <property type="nucleotide sequence ID" value="NM_001427149.1"/>
</dbReference>
<dbReference type="RefSeq" id="NP_001414079.1">
    <molecule id="Q9JLZ8-1"/>
    <property type="nucleotide sequence ID" value="NM_001427150.1"/>
</dbReference>
<dbReference type="RefSeq" id="NP_075546.2">
    <molecule id="Q9JLZ8-1"/>
    <property type="nucleotide sequence ID" value="NM_023059.4"/>
</dbReference>
<dbReference type="RefSeq" id="XP_006536239.1">
    <property type="nucleotide sequence ID" value="XM_006536176.2"/>
</dbReference>
<dbReference type="RefSeq" id="XP_006536240.1">
    <property type="nucleotide sequence ID" value="XM_006536177.3"/>
</dbReference>
<dbReference type="RefSeq" id="XP_006536241.1">
    <property type="nucleotide sequence ID" value="XM_006536178.3"/>
</dbReference>
<dbReference type="RefSeq" id="XP_006536242.1">
    <property type="nucleotide sequence ID" value="XM_006536179.3"/>
</dbReference>
<dbReference type="RefSeq" id="XP_006536243.1">
    <property type="nucleotide sequence ID" value="XM_006536180.2"/>
</dbReference>
<dbReference type="SMR" id="Q9JLZ8"/>
<dbReference type="FunCoup" id="Q9JLZ8">
    <property type="interactions" value="532"/>
</dbReference>
<dbReference type="STRING" id="10090.ENSMUSP00000095571"/>
<dbReference type="GlyCosmos" id="Q9JLZ8">
    <property type="glycosylation" value="5 sites, No reported glycans"/>
</dbReference>
<dbReference type="GlyGen" id="Q9JLZ8">
    <property type="glycosylation" value="7 sites, 1 O-linked glycan (1 site)"/>
</dbReference>
<dbReference type="iPTMnet" id="Q9JLZ8"/>
<dbReference type="PhosphoSitePlus" id="Q9JLZ8"/>
<dbReference type="SwissPalm" id="Q9JLZ8"/>
<dbReference type="jPOST" id="Q9JLZ8"/>
<dbReference type="PaxDb" id="10090-ENSMUSP00000095571"/>
<dbReference type="ProteomicsDB" id="257246">
    <molecule id="Q9JLZ8-1"/>
</dbReference>
<dbReference type="ProteomicsDB" id="257247">
    <molecule id="Q9JLZ8-2"/>
</dbReference>
<dbReference type="Antibodypedia" id="9633">
    <property type="antibodies" value="306 antibodies from 29 providers"/>
</dbReference>
<dbReference type="DNASU" id="24058"/>
<dbReference type="Ensembl" id="ENSMUST00000097958.3">
    <molecule id="Q9JLZ8-1"/>
    <property type="protein sequence ID" value="ENSMUSP00000095571.3"/>
    <property type="gene ID" value="ENSMUSG00000025494.9"/>
</dbReference>
<dbReference type="Ensembl" id="ENSMUST00000209294.2">
    <molecule id="Q9JLZ8-1"/>
    <property type="protein sequence ID" value="ENSMUSP00000147541.2"/>
    <property type="gene ID" value="ENSMUSG00000025494.9"/>
</dbReference>
<dbReference type="Ensembl" id="ENSMUST00000210167.2">
    <molecule id="Q9JLZ8-2"/>
    <property type="protein sequence ID" value="ENSMUSP00000147280.2"/>
    <property type="gene ID" value="ENSMUSG00000025494.9"/>
</dbReference>
<dbReference type="GeneID" id="24058"/>
<dbReference type="KEGG" id="mmu:24058"/>
<dbReference type="UCSC" id="uc009kjk.1">
    <molecule id="Q9JLZ8-1"/>
    <property type="organism name" value="mouse"/>
</dbReference>
<dbReference type="UCSC" id="uc009kjm.1">
    <molecule id="Q9JLZ8-2"/>
    <property type="organism name" value="mouse"/>
</dbReference>
<dbReference type="AGR" id="MGI:1344402"/>
<dbReference type="CTD" id="59307"/>
<dbReference type="MGI" id="MGI:1344402">
    <property type="gene designation" value="Sigirr"/>
</dbReference>
<dbReference type="VEuPathDB" id="HostDB:ENSMUSG00000025494"/>
<dbReference type="eggNOG" id="ENOG502QVF7">
    <property type="taxonomic scope" value="Eukaryota"/>
</dbReference>
<dbReference type="GeneTree" id="ENSGT01090000259985"/>
<dbReference type="HOGENOM" id="CLU_040046_0_0_1"/>
<dbReference type="InParanoid" id="Q9JLZ8"/>
<dbReference type="OMA" id="WCTNNFR"/>
<dbReference type="OrthoDB" id="6075577at2759"/>
<dbReference type="PhylomeDB" id="Q9JLZ8"/>
<dbReference type="TreeFam" id="TF325519"/>
<dbReference type="BioGRID-ORCS" id="24058">
    <property type="hits" value="3 hits in 78 CRISPR screens"/>
</dbReference>
<dbReference type="PRO" id="PR:Q9JLZ8"/>
<dbReference type="Proteomes" id="UP000000589">
    <property type="component" value="Chromosome 7"/>
</dbReference>
<dbReference type="RNAct" id="Q9JLZ8">
    <property type="molecule type" value="protein"/>
</dbReference>
<dbReference type="Bgee" id="ENSMUSG00000025494">
    <property type="expression patterns" value="Expressed in yolk sac and 153 other cell types or tissues"/>
</dbReference>
<dbReference type="ExpressionAtlas" id="Q9JLZ8">
    <property type="expression patterns" value="baseline and differential"/>
</dbReference>
<dbReference type="GO" id="GO:0016020">
    <property type="term" value="C:membrane"/>
    <property type="evidence" value="ECO:0000250"/>
    <property type="project" value="HGNC-UCL"/>
</dbReference>
<dbReference type="GO" id="GO:0006953">
    <property type="term" value="P:acute-phase response"/>
    <property type="evidence" value="ECO:0000315"/>
    <property type="project" value="HGNC-UCL"/>
</dbReference>
<dbReference type="GO" id="GO:0032682">
    <property type="term" value="P:negative regulation of chemokine production"/>
    <property type="evidence" value="ECO:0000315"/>
    <property type="project" value="HGNC-UCL"/>
</dbReference>
<dbReference type="GO" id="GO:0001960">
    <property type="term" value="P:negative regulation of cytokine-mediated signaling pathway"/>
    <property type="evidence" value="ECO:0000315"/>
    <property type="project" value="HGNC-UCL"/>
</dbReference>
<dbReference type="GO" id="GO:2000660">
    <property type="term" value="P:negative regulation of interleukin-1-mediated signaling pathway"/>
    <property type="evidence" value="ECO:0000315"/>
    <property type="project" value="ARUK-UCL"/>
</dbReference>
<dbReference type="GO" id="GO:0045751">
    <property type="term" value="P:negative regulation of Toll signaling pathway"/>
    <property type="evidence" value="ECO:0000250"/>
    <property type="project" value="HGNC-UCL"/>
</dbReference>
<dbReference type="GO" id="GO:0007165">
    <property type="term" value="P:signal transduction"/>
    <property type="evidence" value="ECO:0007669"/>
    <property type="project" value="InterPro"/>
</dbReference>
<dbReference type="CDD" id="cd00096">
    <property type="entry name" value="Ig"/>
    <property type="match status" value="1"/>
</dbReference>
<dbReference type="FunFam" id="2.60.40.10:FF:001586">
    <property type="entry name" value="Single Ig IL-1-related receptor"/>
    <property type="match status" value="1"/>
</dbReference>
<dbReference type="FunFam" id="3.40.50.10140:FF:000011">
    <property type="entry name" value="single Ig IL-1-related receptor isoform X1"/>
    <property type="match status" value="1"/>
</dbReference>
<dbReference type="Gene3D" id="2.60.40.10">
    <property type="entry name" value="Immunoglobulins"/>
    <property type="match status" value="1"/>
</dbReference>
<dbReference type="Gene3D" id="3.40.50.10140">
    <property type="entry name" value="Toll/interleukin-1 receptor homology (TIR) domain"/>
    <property type="match status" value="1"/>
</dbReference>
<dbReference type="InterPro" id="IPR007110">
    <property type="entry name" value="Ig-like_dom"/>
</dbReference>
<dbReference type="InterPro" id="IPR036179">
    <property type="entry name" value="Ig-like_dom_sf"/>
</dbReference>
<dbReference type="InterPro" id="IPR013783">
    <property type="entry name" value="Ig-like_fold"/>
</dbReference>
<dbReference type="InterPro" id="IPR015621">
    <property type="entry name" value="IL-1_rcpt_fam"/>
</dbReference>
<dbReference type="InterPro" id="IPR000157">
    <property type="entry name" value="TIR_dom"/>
</dbReference>
<dbReference type="InterPro" id="IPR035897">
    <property type="entry name" value="Toll_tir_struct_dom_sf"/>
</dbReference>
<dbReference type="PANTHER" id="PTHR11890">
    <property type="entry name" value="INTERLEUKIN-1 RECEPTOR FAMILY MEMBER"/>
    <property type="match status" value="1"/>
</dbReference>
<dbReference type="PANTHER" id="PTHR11890:SF19">
    <property type="entry name" value="SINGLE IG IL-1-RELATED RECEPTOR"/>
    <property type="match status" value="1"/>
</dbReference>
<dbReference type="Pfam" id="PF13895">
    <property type="entry name" value="Ig_2"/>
    <property type="match status" value="1"/>
</dbReference>
<dbReference type="Pfam" id="PF01582">
    <property type="entry name" value="TIR"/>
    <property type="match status" value="1"/>
</dbReference>
<dbReference type="PRINTS" id="PR01537">
    <property type="entry name" value="INTRLKN1R1F"/>
</dbReference>
<dbReference type="SMART" id="SM00255">
    <property type="entry name" value="TIR"/>
    <property type="match status" value="1"/>
</dbReference>
<dbReference type="SUPFAM" id="SSF48726">
    <property type="entry name" value="Immunoglobulin"/>
    <property type="match status" value="1"/>
</dbReference>
<dbReference type="SUPFAM" id="SSF52200">
    <property type="entry name" value="Toll/Interleukin receptor TIR domain"/>
    <property type="match status" value="1"/>
</dbReference>
<dbReference type="PROSITE" id="PS50835">
    <property type="entry name" value="IG_LIKE"/>
    <property type="match status" value="1"/>
</dbReference>
<dbReference type="PROSITE" id="PS50104">
    <property type="entry name" value="TIR"/>
    <property type="match status" value="1"/>
</dbReference>